<name>RS19_LACLM</name>
<organism>
    <name type="scientific">Lactococcus lactis subsp. cremoris (strain MG1363)</name>
    <dbReference type="NCBI Taxonomy" id="416870"/>
    <lineage>
        <taxon>Bacteria</taxon>
        <taxon>Bacillati</taxon>
        <taxon>Bacillota</taxon>
        <taxon>Bacilli</taxon>
        <taxon>Lactobacillales</taxon>
        <taxon>Streptococcaceae</taxon>
        <taxon>Lactococcus</taxon>
        <taxon>Lactococcus cremoris subsp. cremoris</taxon>
    </lineage>
</organism>
<feature type="chain" id="PRO_1000051066" description="Small ribosomal subunit protein uS19">
    <location>
        <begin position="1"/>
        <end position="92"/>
    </location>
</feature>
<reference key="1">
    <citation type="journal article" date="2007" name="J. Bacteriol.">
        <title>The complete genome sequence of the lactic acid bacterial paradigm Lactococcus lactis subsp. cremoris MG1363.</title>
        <authorList>
            <person name="Wegmann U."/>
            <person name="O'Connell-Motherway M."/>
            <person name="Zomer A."/>
            <person name="Buist G."/>
            <person name="Shearman C."/>
            <person name="Canchaya C."/>
            <person name="Ventura M."/>
            <person name="Goesmann A."/>
            <person name="Gasson M.J."/>
            <person name="Kuipers O.P."/>
            <person name="van Sinderen D."/>
            <person name="Kok J."/>
        </authorList>
    </citation>
    <scope>NUCLEOTIDE SEQUENCE [LARGE SCALE GENOMIC DNA]</scope>
    <source>
        <strain>MG1363</strain>
    </source>
</reference>
<protein>
    <recommendedName>
        <fullName evidence="1">Small ribosomal subunit protein uS19</fullName>
    </recommendedName>
    <alternativeName>
        <fullName evidence="2">30S ribosomal protein S19</fullName>
    </alternativeName>
</protein>
<proteinExistence type="evidence at protein level"/>
<sequence length="92" mass="10572">MGRSLKKGPFVDEHLMKKVEAQTNAERKSVIKTWSRRSTIFPNFVGLTIAVYDGRKHVPVYVQEDMVGHKLGEFAPTRTYRGHAADDKKTRR</sequence>
<keyword id="KW-0002">3D-structure</keyword>
<keyword id="KW-0687">Ribonucleoprotein</keyword>
<keyword id="KW-0689">Ribosomal protein</keyword>
<keyword id="KW-0694">RNA-binding</keyword>
<keyword id="KW-0699">rRNA-binding</keyword>
<accession>A2RNQ1</accession>
<comment type="function">
    <text evidence="1">Protein S19 forms a complex with S13 that binds strongly to the 16S ribosomal RNA.</text>
</comment>
<comment type="similarity">
    <text evidence="1">Belongs to the universal ribosomal protein uS19 family.</text>
</comment>
<gene>
    <name evidence="1" type="primary">rpsS</name>
    <name type="ordered locus">llmg_2379</name>
</gene>
<evidence type="ECO:0000255" key="1">
    <source>
        <dbReference type="HAMAP-Rule" id="MF_00531"/>
    </source>
</evidence>
<evidence type="ECO:0000305" key="2"/>
<dbReference type="EMBL" id="AM406671">
    <property type="protein sequence ID" value="CAL98942.1"/>
    <property type="molecule type" value="Genomic_DNA"/>
</dbReference>
<dbReference type="RefSeq" id="WP_011677159.1">
    <property type="nucleotide sequence ID" value="NC_009004.1"/>
</dbReference>
<dbReference type="PDB" id="5MYJ">
    <property type="method" value="EM"/>
    <property type="resolution" value="5.60 A"/>
    <property type="chains" value="AS=1-92"/>
</dbReference>
<dbReference type="PDBsum" id="5MYJ"/>
<dbReference type="EMDB" id="EMD-3581"/>
<dbReference type="SMR" id="A2RNQ1"/>
<dbReference type="STRING" id="416870.llmg_2379"/>
<dbReference type="GeneID" id="61110423"/>
<dbReference type="KEGG" id="llm:llmg_2379"/>
<dbReference type="eggNOG" id="COG0185">
    <property type="taxonomic scope" value="Bacteria"/>
</dbReference>
<dbReference type="HOGENOM" id="CLU_144911_0_1_9"/>
<dbReference type="OrthoDB" id="9797833at2"/>
<dbReference type="PhylomeDB" id="A2RNQ1"/>
<dbReference type="Proteomes" id="UP000000364">
    <property type="component" value="Chromosome"/>
</dbReference>
<dbReference type="GO" id="GO:0005737">
    <property type="term" value="C:cytoplasm"/>
    <property type="evidence" value="ECO:0007669"/>
    <property type="project" value="UniProtKB-ARBA"/>
</dbReference>
<dbReference type="GO" id="GO:0015935">
    <property type="term" value="C:small ribosomal subunit"/>
    <property type="evidence" value="ECO:0007669"/>
    <property type="project" value="InterPro"/>
</dbReference>
<dbReference type="GO" id="GO:0019843">
    <property type="term" value="F:rRNA binding"/>
    <property type="evidence" value="ECO:0007669"/>
    <property type="project" value="UniProtKB-UniRule"/>
</dbReference>
<dbReference type="GO" id="GO:0003735">
    <property type="term" value="F:structural constituent of ribosome"/>
    <property type="evidence" value="ECO:0007669"/>
    <property type="project" value="InterPro"/>
</dbReference>
<dbReference type="GO" id="GO:0000028">
    <property type="term" value="P:ribosomal small subunit assembly"/>
    <property type="evidence" value="ECO:0007669"/>
    <property type="project" value="TreeGrafter"/>
</dbReference>
<dbReference type="GO" id="GO:0006412">
    <property type="term" value="P:translation"/>
    <property type="evidence" value="ECO:0007669"/>
    <property type="project" value="UniProtKB-UniRule"/>
</dbReference>
<dbReference type="FunFam" id="3.30.860.10:FF:000001">
    <property type="entry name" value="30S ribosomal protein S19"/>
    <property type="match status" value="1"/>
</dbReference>
<dbReference type="Gene3D" id="3.30.860.10">
    <property type="entry name" value="30s Ribosomal Protein S19, Chain A"/>
    <property type="match status" value="1"/>
</dbReference>
<dbReference type="HAMAP" id="MF_00531">
    <property type="entry name" value="Ribosomal_uS19"/>
    <property type="match status" value="1"/>
</dbReference>
<dbReference type="InterPro" id="IPR002222">
    <property type="entry name" value="Ribosomal_uS19"/>
</dbReference>
<dbReference type="InterPro" id="IPR005732">
    <property type="entry name" value="Ribosomal_uS19_bac-type"/>
</dbReference>
<dbReference type="InterPro" id="IPR020934">
    <property type="entry name" value="Ribosomal_uS19_CS"/>
</dbReference>
<dbReference type="InterPro" id="IPR023575">
    <property type="entry name" value="Ribosomal_uS19_SF"/>
</dbReference>
<dbReference type="NCBIfam" id="TIGR01050">
    <property type="entry name" value="rpsS_bact"/>
    <property type="match status" value="1"/>
</dbReference>
<dbReference type="PANTHER" id="PTHR11880">
    <property type="entry name" value="RIBOSOMAL PROTEIN S19P FAMILY MEMBER"/>
    <property type="match status" value="1"/>
</dbReference>
<dbReference type="PANTHER" id="PTHR11880:SF8">
    <property type="entry name" value="SMALL RIBOSOMAL SUBUNIT PROTEIN US19M"/>
    <property type="match status" value="1"/>
</dbReference>
<dbReference type="Pfam" id="PF00203">
    <property type="entry name" value="Ribosomal_S19"/>
    <property type="match status" value="1"/>
</dbReference>
<dbReference type="PIRSF" id="PIRSF002144">
    <property type="entry name" value="Ribosomal_S19"/>
    <property type="match status" value="1"/>
</dbReference>
<dbReference type="PRINTS" id="PR00975">
    <property type="entry name" value="RIBOSOMALS19"/>
</dbReference>
<dbReference type="SUPFAM" id="SSF54570">
    <property type="entry name" value="Ribosomal protein S19"/>
    <property type="match status" value="1"/>
</dbReference>
<dbReference type="PROSITE" id="PS00323">
    <property type="entry name" value="RIBOSOMAL_S19"/>
    <property type="match status" value="1"/>
</dbReference>